<organism>
    <name type="scientific">Bos taurus</name>
    <name type="common">Bovine</name>
    <dbReference type="NCBI Taxonomy" id="9913"/>
    <lineage>
        <taxon>Eukaryota</taxon>
        <taxon>Metazoa</taxon>
        <taxon>Chordata</taxon>
        <taxon>Craniata</taxon>
        <taxon>Vertebrata</taxon>
        <taxon>Euteleostomi</taxon>
        <taxon>Mammalia</taxon>
        <taxon>Eutheria</taxon>
        <taxon>Laurasiatheria</taxon>
        <taxon>Artiodactyla</taxon>
        <taxon>Ruminantia</taxon>
        <taxon>Pecora</taxon>
        <taxon>Bovidae</taxon>
        <taxon>Bovinae</taxon>
        <taxon>Bos</taxon>
    </lineage>
</organism>
<proteinExistence type="evidence at transcript level"/>
<sequence>MPHSSLHPSIPQPRGLRAQKAALVLLSACLVALWGLGEPPDYTLKWLVLHLASQQMGLLIKGICSLAEELCHVHSRYHGSYWRAVRACLCSSMRCGALLLLSCYFYCSLPNMADLPFTWMLALLGLSQALNILLGLQGLAPAEVSAICEKRNFNVAHGLAWSYYIGYLRLILPGLPARIQIYNQFHNNTLQGAGSHRLHILFPLDCGVPDDLNVADPNIRFLHELPQQSADRAGIKGRVYTNSIYELLENGQRAGVCVLEYATPLQTLFAMSQDGRAGFSREDRLEQAKLFCRTLEDILANAPESQNNCRLIVYQEPAEGSSFSLSQEILQHLRQEEREVTMGSTETSVMPGSSVLSQEPELLISGLEKPLPLRSDVF</sequence>
<dbReference type="EMBL" id="BC112716">
    <property type="protein sequence ID" value="AAI12717.1"/>
    <property type="molecule type" value="mRNA"/>
</dbReference>
<dbReference type="RefSeq" id="NP_001039822.1">
    <property type="nucleotide sequence ID" value="NM_001046357.2"/>
</dbReference>
<dbReference type="RefSeq" id="XP_024850135.1">
    <property type="nucleotide sequence ID" value="XM_024994367.2"/>
</dbReference>
<dbReference type="RefSeq" id="XP_059744253.1">
    <property type="nucleotide sequence ID" value="XM_059888270.1"/>
</dbReference>
<dbReference type="SMR" id="Q2KI99"/>
<dbReference type="FunCoup" id="Q2KI99">
    <property type="interactions" value="749"/>
</dbReference>
<dbReference type="STRING" id="9913.ENSBTAP00000062677"/>
<dbReference type="PaxDb" id="9913-ENSBTAP00000002962"/>
<dbReference type="GeneID" id="533661"/>
<dbReference type="KEGG" id="bta:533661"/>
<dbReference type="CTD" id="340061"/>
<dbReference type="VEuPathDB" id="HostDB:ENSBTAG00000002296"/>
<dbReference type="eggNOG" id="ENOG502R15M">
    <property type="taxonomic scope" value="Eukaryota"/>
</dbReference>
<dbReference type="HOGENOM" id="CLU_062449_0_0_1"/>
<dbReference type="InParanoid" id="Q2KI99"/>
<dbReference type="OMA" id="QYGQAGF"/>
<dbReference type="OrthoDB" id="6053839at2759"/>
<dbReference type="TreeFam" id="TF324444"/>
<dbReference type="Reactome" id="R-BTA-1834941">
    <property type="pathway name" value="STING mediated induction of host immune responses"/>
</dbReference>
<dbReference type="Reactome" id="R-BTA-3134975">
    <property type="pathway name" value="Regulation of innate immune responses to cytosolic DNA"/>
</dbReference>
<dbReference type="Reactome" id="R-BTA-3249367">
    <property type="pathway name" value="STAT6-mediated induction of chemokines"/>
</dbReference>
<dbReference type="Reactome" id="R-BTA-3270619">
    <property type="pathway name" value="IRF3-mediated induction of type I IFN"/>
</dbReference>
<dbReference type="Reactome" id="R-BTA-6798695">
    <property type="pathway name" value="Neutrophil degranulation"/>
</dbReference>
<dbReference type="Proteomes" id="UP000009136">
    <property type="component" value="Chromosome 7"/>
</dbReference>
<dbReference type="Bgee" id="ENSBTAG00000002296">
    <property type="expression patterns" value="Expressed in monocyte and 105 other cell types or tissues"/>
</dbReference>
<dbReference type="GO" id="GO:0005776">
    <property type="term" value="C:autophagosome"/>
    <property type="evidence" value="ECO:0000318"/>
    <property type="project" value="GO_Central"/>
</dbReference>
<dbReference type="GO" id="GO:0000421">
    <property type="term" value="C:autophagosome membrane"/>
    <property type="evidence" value="ECO:0007669"/>
    <property type="project" value="UniProtKB-SubCell"/>
</dbReference>
<dbReference type="GO" id="GO:0005737">
    <property type="term" value="C:cytoplasm"/>
    <property type="evidence" value="ECO:0000250"/>
    <property type="project" value="UniProtKB"/>
</dbReference>
<dbReference type="GO" id="GO:0031410">
    <property type="term" value="C:cytoplasmic vesicle"/>
    <property type="evidence" value="ECO:0007669"/>
    <property type="project" value="UniProtKB-KW"/>
</dbReference>
<dbReference type="GO" id="GO:0005789">
    <property type="term" value="C:endoplasmic reticulum membrane"/>
    <property type="evidence" value="ECO:0000250"/>
    <property type="project" value="UniProtKB"/>
</dbReference>
<dbReference type="GO" id="GO:0033116">
    <property type="term" value="C:endoplasmic reticulum-Golgi intermediate compartment membrane"/>
    <property type="evidence" value="ECO:0007669"/>
    <property type="project" value="UniProtKB-SubCell"/>
</dbReference>
<dbReference type="GO" id="GO:0000139">
    <property type="term" value="C:Golgi membrane"/>
    <property type="evidence" value="ECO:0007669"/>
    <property type="project" value="UniProtKB-SubCell"/>
</dbReference>
<dbReference type="GO" id="GO:0005741">
    <property type="term" value="C:mitochondrial outer membrane"/>
    <property type="evidence" value="ECO:0007669"/>
    <property type="project" value="UniProtKB-SubCell"/>
</dbReference>
<dbReference type="GO" id="GO:0048471">
    <property type="term" value="C:perinuclear region of cytoplasm"/>
    <property type="evidence" value="ECO:0000250"/>
    <property type="project" value="UniProtKB"/>
</dbReference>
<dbReference type="GO" id="GO:0005886">
    <property type="term" value="C:plasma membrane"/>
    <property type="evidence" value="ECO:0007669"/>
    <property type="project" value="UniProtKB-SubCell"/>
</dbReference>
<dbReference type="GO" id="GO:0061507">
    <property type="term" value="F:2',3'-cyclic GMP-AMP binding"/>
    <property type="evidence" value="ECO:0000250"/>
    <property type="project" value="UniProtKB"/>
</dbReference>
<dbReference type="GO" id="GO:0035438">
    <property type="term" value="F:cyclic-di-GMP binding"/>
    <property type="evidence" value="ECO:0000250"/>
    <property type="project" value="UniProtKB"/>
</dbReference>
<dbReference type="GO" id="GO:0042803">
    <property type="term" value="F:protein homodimerization activity"/>
    <property type="evidence" value="ECO:0000250"/>
    <property type="project" value="UniProtKB"/>
</dbReference>
<dbReference type="GO" id="GO:0015252">
    <property type="term" value="F:proton channel activity"/>
    <property type="evidence" value="ECO:0000250"/>
    <property type="project" value="UniProtKB"/>
</dbReference>
<dbReference type="GO" id="GO:0035591">
    <property type="term" value="F:signaling adaptor activity"/>
    <property type="evidence" value="ECO:0000250"/>
    <property type="project" value="UniProtKB"/>
</dbReference>
<dbReference type="GO" id="GO:0002218">
    <property type="term" value="P:activation of innate immune response"/>
    <property type="evidence" value="ECO:0000250"/>
    <property type="project" value="UniProtKB"/>
</dbReference>
<dbReference type="GO" id="GO:0000045">
    <property type="term" value="P:autophagosome assembly"/>
    <property type="evidence" value="ECO:0000250"/>
    <property type="project" value="UniProtKB"/>
</dbReference>
<dbReference type="GO" id="GO:0140896">
    <property type="term" value="P:cGAS/STING signaling pathway"/>
    <property type="evidence" value="ECO:0000250"/>
    <property type="project" value="UniProtKB"/>
</dbReference>
<dbReference type="GO" id="GO:0051607">
    <property type="term" value="P:defense response to virus"/>
    <property type="evidence" value="ECO:0000250"/>
    <property type="project" value="UniProtKB"/>
</dbReference>
<dbReference type="GO" id="GO:0045087">
    <property type="term" value="P:innate immune response"/>
    <property type="evidence" value="ECO:0000250"/>
    <property type="project" value="UniProtKB"/>
</dbReference>
<dbReference type="GO" id="GO:0032728">
    <property type="term" value="P:positive regulation of interferon-beta production"/>
    <property type="evidence" value="ECO:0000250"/>
    <property type="project" value="UniProtKB"/>
</dbReference>
<dbReference type="GO" id="GO:0016239">
    <property type="term" value="P:positive regulation of macroautophagy"/>
    <property type="evidence" value="ECO:0000250"/>
    <property type="project" value="UniProtKB"/>
</dbReference>
<dbReference type="GO" id="GO:0032481">
    <property type="term" value="P:positive regulation of type I interferon production"/>
    <property type="evidence" value="ECO:0000250"/>
    <property type="project" value="UniProtKB"/>
</dbReference>
<dbReference type="GO" id="GO:0061709">
    <property type="term" value="P:reticulophagy"/>
    <property type="evidence" value="ECO:0000250"/>
    <property type="project" value="UniProtKB"/>
</dbReference>
<dbReference type="CDD" id="cd22658">
    <property type="entry name" value="STING_C_metazoan-like"/>
    <property type="match status" value="1"/>
</dbReference>
<dbReference type="FunFam" id="1.20.5.5200:FF:000001">
    <property type="entry name" value="Stimulator of interferon genes protein"/>
    <property type="match status" value="1"/>
</dbReference>
<dbReference type="FunFam" id="3.40.50.12100:FF:000001">
    <property type="entry name" value="Stimulator of interferon genes protein"/>
    <property type="match status" value="1"/>
</dbReference>
<dbReference type="Gene3D" id="1.20.5.5200">
    <property type="match status" value="1"/>
</dbReference>
<dbReference type="Gene3D" id="3.40.50.12100">
    <property type="entry name" value="Stimulator of interferon genes protein"/>
    <property type="match status" value="1"/>
</dbReference>
<dbReference type="InterPro" id="IPR029158">
    <property type="entry name" value="STING"/>
</dbReference>
<dbReference type="InterPro" id="IPR047191">
    <property type="entry name" value="STING_C_chordates"/>
</dbReference>
<dbReference type="InterPro" id="IPR038623">
    <property type="entry name" value="STING_C_sf"/>
</dbReference>
<dbReference type="InterPro" id="IPR055432">
    <property type="entry name" value="STING_LBD"/>
</dbReference>
<dbReference type="InterPro" id="IPR055434">
    <property type="entry name" value="STING_TM"/>
</dbReference>
<dbReference type="PANTHER" id="PTHR34339">
    <property type="entry name" value="STIMULATOR OF INTERFERON GENES PROTEIN"/>
    <property type="match status" value="1"/>
</dbReference>
<dbReference type="PANTHER" id="PTHR34339:SF1">
    <property type="entry name" value="STIMULATOR OF INTERFERON GENES PROTEIN"/>
    <property type="match status" value="1"/>
</dbReference>
<dbReference type="Pfam" id="PF15009">
    <property type="entry name" value="STING_LBD"/>
    <property type="match status" value="1"/>
</dbReference>
<dbReference type="Pfam" id="PF23417">
    <property type="entry name" value="STING_TM"/>
    <property type="match status" value="1"/>
</dbReference>
<gene>
    <name evidence="3" type="primary">STING1</name>
    <name evidence="3" type="synonym">STING</name>
    <name evidence="3" type="synonym">TMEM173</name>
</gene>
<reference key="1">
    <citation type="submission" date="2006-01" db="EMBL/GenBank/DDBJ databases">
        <authorList>
            <consortium name="NIH - Mammalian Gene Collection (MGC) project"/>
        </authorList>
    </citation>
    <scope>NUCLEOTIDE SEQUENCE [LARGE SCALE MRNA]</scope>
    <source>
        <strain>Hereford</strain>
        <tissue>Heart ventricle</tissue>
    </source>
</reference>
<protein>
    <recommendedName>
        <fullName evidence="3">Stimulator of interferon genes protein</fullName>
        <shortName evidence="3">STING</shortName>
    </recommendedName>
    <alternativeName>
        <fullName evidence="5">Transmembrane protein 173</fullName>
    </alternativeName>
</protein>
<name>STING_BOVIN</name>
<accession>Q2KI99</accession>
<evidence type="ECO:0000250" key="1">
    <source>
        <dbReference type="UniProtKB" id="E1C7U0"/>
    </source>
</evidence>
<evidence type="ECO:0000250" key="2">
    <source>
        <dbReference type="UniProtKB" id="Q3TBT3"/>
    </source>
</evidence>
<evidence type="ECO:0000250" key="3">
    <source>
        <dbReference type="UniProtKB" id="Q86WV6"/>
    </source>
</evidence>
<evidence type="ECO:0000255" key="4"/>
<evidence type="ECO:0000305" key="5"/>
<comment type="function">
    <text evidence="2 3">Facilitator of innate immune signaling that acts as a sensor of cytosolic DNA from bacteria and viruses and promotes the production of type I interferon (IFN-alpha and IFN-beta). Innate immune response is triggered in response to non-CpG double-stranded DNA from viruses and bacteria delivered to the cytoplasm. Acts by binding cyclic dinucleotides: recognizes and binds cyclic di-GMP (c-di-GMP), a second messenger produced by bacteria, cyclic UMP-AMP (2',3'-cUAMP), and cyclic GMP-AMP (cGAMP), a messenger produced by CGAS in response to DNA virus in the cytosol. Upon binding to c-di-GMP or cGAMP, STING oligomerizes, translocates from the endoplasmic reticulum and is phosphorylated by TBK1 on the pLxIS motif, leading to recruitment and subsequent activation of the transcription factor IRF3 to induce expression of type I interferon and exert a potent anti-viral state. Exhibits 2',3' phosphodiester linkage-specific ligand recognition: can bind both 2'-3' linked cGAMP (2'-3'-cGAMP) and 3'-3' linked cGAMP but is preferentially activated by 2'-3' linked cGAMP. The preference for 2'-3'-cGAMP, compared to other linkage isomers is probably due to the ligand itself, whichs adopts an organized free-ligand conformation that resembles the STING1-bound conformation and pays low energy costs in changing into the active conformation. In addition to promote the production of type I interferons, plays a direct role in autophagy. Following cGAMP-binding, STING1 buds from the endoplasmic reticulum into COPII vesicles, which then form the endoplasmic reticulum-Golgi intermediate compartment (ERGIC). The ERGIC serves as the membrane source for WIPI2 recruitment and LC3 lipidation, leading to formation of autophagosomes that target cytosolic DNA or DNA viruses for degradation by the lysosome. Promotes autophagy by acting as a proton channel that directs proton efflux from the Golgi to facilitate MAP1LC3B/LC3B lipidation. The autophagy- and interferon-inducing activities can be uncoupled and autophagy induction is independent of TBK1 phosphorylation. Autophagy is also triggered upon infection by bacteria: following c-di-GMP-binding, which is produced by live Gram-positive bacteria, promotes reticulophagy. May be involved in translocon function, the translocon possibly being able to influence the induction of type I interferons. May be involved in transduction of apoptotic signals via its association with the major histocompatibility complex class II (MHC-II).</text>
</comment>
<comment type="catalytic activity">
    <reaction evidence="3">
        <text>H(+)(in) = H(+)(out)</text>
        <dbReference type="Rhea" id="RHEA:34979"/>
        <dbReference type="ChEBI" id="CHEBI:15378"/>
    </reaction>
</comment>
<comment type="subunit">
    <text evidence="2 3">Homodimer; forms a homodimer in absence of cyclic nucleotide (c-di-GMP or cGAMP); 'Lys-63'-linked ubiquitination at Lys-150 is required for homodimerization (By similarity). Homotetramer; in presence of cyclic nucleotide (c-di-GMP or cGAMP), forms tetramers and higher-order oligomers through side-by-side packing (By similarity). Interacts (when phosphorylated) with IRF3; following activation and phosphorylation on the pLxIS motif by TBK1, recruits IRF3 (By similarity). Interacts with RIGI, MAVS and SSR2 (By similarity). Interacts with RNF5 and TRIM56 (By similarity). Interacts with TBK1; when homodimer, leading to subsequent production of IFN-beta (By similarity). Interacts with IFIT1 and IFIT2 (By similarity). Interacts with TRIM29; this interaction induces STING1 ubiquitination and subsequent degradation (By similarity). Associates with the MHC-II complex (By similarity). Interacts with STEEP1; interaction takes place upon cGAMP-activation and STING1 phosphorylation by MAP3K7/TAK1 and promotes STING1 translocation to COPII vesicles (By similarity). Interacts with SEC24A, SEC24B and SEC24C; promoting translocation to COPII vesicles (By similarity). Interacts (when ubiquitinated) with SQSTM1; leading to relocalization to autophagosomes (By similarity). Interacts with SURF4 (By similarity). Interacts with HNRNPA2B1 (By similarity). Interacts with ZDHHC1; ZDHHC1 constitutively interacts with STING1 and in presence of DNA viruses activates it by promoting its cGAMP-induced oligomerization and the recruitment of downstream signaling components (By similarity). Interacts with ZDHHC11; in presence of DNA viruses promotes the recruitment of IRF3 to STING1 (By similarity). Interacts with TOMM70 (By similarity). Interacts with TAB1; promoting recruitment of TAB1 to the endoplasmic reticulum membrane and subsequent activation of MAP3K7/TAK1 (By similarity). Interacts (via transmembrane domain) with TMEM203 (By similarity). Interacts with DDX41 (By similarity).</text>
</comment>
<comment type="subcellular location">
    <subcellularLocation>
        <location evidence="3">Endoplasmic reticulum membrane</location>
        <topology evidence="3 4">Multi-pass membrane protein</topology>
    </subcellularLocation>
    <subcellularLocation>
        <location evidence="3">Cytoplasm</location>
        <location evidence="3">Perinuclear region</location>
    </subcellularLocation>
    <subcellularLocation>
        <location evidence="3">Endoplasmic reticulum-Golgi intermediate compartment membrane</location>
        <topology evidence="4">Multi-pass membrane protein</topology>
    </subcellularLocation>
    <subcellularLocation>
        <location evidence="3">Golgi apparatus membrane</location>
        <topology evidence="4">Multi-pass membrane protein</topology>
    </subcellularLocation>
    <subcellularLocation>
        <location evidence="3">Cytoplasmic vesicle</location>
        <location evidence="3">Autophagosome membrane</location>
        <topology evidence="4">Multi-pass membrane protein</topology>
    </subcellularLocation>
    <subcellularLocation>
        <location evidence="3">Mitochondrion outer membrane</location>
        <topology evidence="4">Multi-pass membrane protein</topology>
    </subcellularLocation>
    <subcellularLocation>
        <location evidence="2">Cell membrane</location>
        <topology evidence="4">Multi-pass membrane protein</topology>
    </subcellularLocation>
    <text evidence="2 3">In response to double-stranded DNA stimulation, translocates from the endoplasmic reticulum through the endoplasmic reticulum-Golgi intermediate compartment and Golgi to post-Golgi vesicles, where the kinase TBK1 is recruited. Upon cGAMP-binding, translocates to the endoplasmic reticulum-Golgi intermediate compartment (ERGIC) in a process that is dependent on COPII vesicles; STING1-containing ERGIC serves as a membrane source for LC3 lipidation, which is a key step in autophagosome biogenesis. Localizes in the lysosome membrane in a TMEM203-dependent manner.</text>
</comment>
<comment type="domain">
    <text evidence="1 3">In absence of cGAMP, the transmembrane and cytoplasmic regions interact to form an integrated, domain-swapped dimeric assembly (By similarity). In absence of cyclic nucleotide (c-di-GMP or cGAMP), the protein is autoinhibited by an intramolecular interaction between the cyclic dinucleotide-binding domain (CBD) and the C-terminal tail (CTT) (By similarity). Following cGAMP-binding, the cyclic dinucleotide-binding domain (CBD) is closed, leading to a 180 degrees rotation of the CBD domain relative to the transmembrane domain. This rotation is coupled to a conformational change in a loop on the side of the CBD dimer, which leads to the formation of the STING1 tetramer and higher-order oligomers through side-by-side packing (By similarity). The N-terminal part of the CBD region was initially though to contain a fifth transmembrane region (TM5) but is part of the folded, soluble CBD (By similarity).</text>
</comment>
<comment type="domain">
    <text evidence="3">The pLxIS motif constitutes an IRF3-binding motif: following phosphorylation by TBK1, the phosphorylated pLxIS motif of STING1 recruits IRF3. IRF3 is then phosphorylated and activated by TBK1 to induce type-I interferons and other cytokines.</text>
</comment>
<comment type="domain">
    <text evidence="3">The N-terminal domain interacts with glycerophospholipids and phospholipids.</text>
</comment>
<comment type="PTM">
    <text evidence="2 3">Phosphorylation by TBK1 leads to activation and production of IFN-beta. Following cyclic nucleotide (c-di-GMP or cGAMP)-binding, activation and translocation from the endoplasmic reticulum, STING1 is phosphorylated by TBK1 at Ser-365 in the pLxIS motif. The phosphorylated pLxIS motif constitutes an IRF3-binding motif, leading to recruitment of the transcription factor IRF3 to induce type-I interferons and other cytokines (By similarity). Phosphorylated on tyrosine residues upon MHC-II aggregation (By similarity). Dephosphorylation by PPP6C leads to inactivation and decreased production of IFN-beta (By similarity). Phosphorylation at Ser-357 is also required to activate IRF3 (By similarity). Phosphorylation at Ser-354 by MAP3K7/TAK1 facilitates its interaction with STEEP1, promoting STING1 translocation to COPII vesicles (By similarity).</text>
</comment>
<comment type="PTM">
    <text evidence="2 3">Ubiquitinated (By similarity). Ubiquitinated via 'Lys-63'-linked ubiquitin chains in response to double-stranded DNA treatment, leading to relocalization to autophagosomes and subsequent degradation; this process is dependent on SQSTM1 (By similarity). 'Lys-63'-linked ubiquitination mediated by TRIM56 at Lys-150 promotes homodimerization and recruitment of the antiviral kinase TBK1 and subsequent production of IFN-beta. 'Lys-48'-linked polyubiquitination at Lys-150 occurring after viral infection is mediated by RNF5 and leads to proteasomal degradation. 'Lys-11'-linked polyubiquitination at Lys-150 by RNF26 leads to stabilize STING1: it protects STING1 from RNF5-mediated 'Lys-48'-linked polyubiquitination (By similarity). 'Lys-33'-linked and 'Lys-48'-linked deubiquitinated by USP20; leading to its stabilization and promotion of innate antiviral response (By similarity). 'Lys-48'-linked deubiquitinated by USP44; leading to its stabilization and promotion of innate antiviral response (By similarity). 'Lys-63'-linked deubiquitinated by USP49; leading to inhibition of the subsequent recruitment of TBK1 to the signaling complex (By similarity). 'Lys-63'-linked ubiquitination mediated by RNF39 promotes the activation of the cGAS-STING pathway (By similarity).</text>
</comment>
<comment type="PTM">
    <text evidence="2">Palmitoylation takes place in the Golgi apparatus and creates a platform for the recruitment of TBK1.</text>
</comment>
<comment type="similarity">
    <text evidence="5">Belongs to the STING family.</text>
</comment>
<feature type="chain" id="PRO_0000271115" description="Stimulator of interferon genes protein">
    <location>
        <begin position="1"/>
        <end position="378"/>
    </location>
</feature>
<feature type="topological domain" description="Cytoplasmic" evidence="5">
    <location>
        <begin position="1"/>
        <end position="17"/>
    </location>
</feature>
<feature type="transmembrane region" description="Helical; Name=1" evidence="3">
    <location>
        <begin position="18"/>
        <end position="34"/>
    </location>
</feature>
<feature type="topological domain" description="Lumenal" evidence="5">
    <location>
        <begin position="35"/>
        <end position="44"/>
    </location>
</feature>
<feature type="transmembrane region" description="Helical; Name=2" evidence="3">
    <location>
        <begin position="45"/>
        <end position="69"/>
    </location>
</feature>
<feature type="topological domain" description="Cytoplasmic" evidence="5">
    <location>
        <begin position="70"/>
        <end position="91"/>
    </location>
</feature>
<feature type="transmembrane region" description="Helical; Name=3" evidence="3">
    <location>
        <begin position="92"/>
        <end position="106"/>
    </location>
</feature>
<feature type="topological domain" description="Lumenal" evidence="5">
    <location>
        <begin position="107"/>
        <end position="116"/>
    </location>
</feature>
<feature type="transmembrane region" description="Helical; Name=4" evidence="3">
    <location>
        <begin position="117"/>
        <end position="134"/>
    </location>
</feature>
<feature type="topological domain" description="Cytoplasmic" evidence="5">
    <location>
        <begin position="135"/>
        <end position="378"/>
    </location>
</feature>
<feature type="region of interest" description="Mediates interaction with ZDHHC1 and ZDHHC11" evidence="3">
    <location>
        <begin position="1"/>
        <end position="190"/>
    </location>
</feature>
<feature type="region of interest" description="Cyclic dinucleotide-binding domain (CBD)" evidence="3">
    <location>
        <begin position="153"/>
        <end position="339"/>
    </location>
</feature>
<feature type="region of interest" description="C-terminal tail (CTT)" evidence="3">
    <location>
        <begin position="339"/>
        <end position="378"/>
    </location>
</feature>
<feature type="short sequence motif" description="pLxIS motif" evidence="3">
    <location>
        <begin position="362"/>
        <end position="365"/>
    </location>
</feature>
<feature type="binding site" evidence="3">
    <location>
        <position position="162"/>
    </location>
    <ligand>
        <name>2',3'-cGAMP</name>
        <dbReference type="ChEBI" id="CHEBI:143093"/>
    </ligand>
</feature>
<feature type="binding site" evidence="3">
    <location>
        <position position="162"/>
    </location>
    <ligand>
        <name>3',3'-c-di-GMP</name>
        <dbReference type="ChEBI" id="CHEBI:58805"/>
    </ligand>
</feature>
<feature type="binding site" evidence="3">
    <location>
        <position position="167"/>
    </location>
    <ligand>
        <name>2',3'-cGAMP</name>
        <dbReference type="ChEBI" id="CHEBI:143093"/>
    </ligand>
</feature>
<feature type="binding site" evidence="3">
    <location>
        <position position="167"/>
    </location>
    <ligand>
        <name>2',3'-cUAMP</name>
        <dbReference type="ChEBI" id="CHEBI:228269"/>
    </ligand>
</feature>
<feature type="binding site" evidence="3">
    <location>
        <position position="167"/>
    </location>
    <ligand>
        <name>3',3'-c-di-GMP</name>
        <dbReference type="ChEBI" id="CHEBI:58805"/>
    </ligand>
</feature>
<feature type="binding site" evidence="3">
    <location>
        <begin position="238"/>
        <end position="241"/>
    </location>
    <ligand>
        <name>3',3'-c-di-GMP</name>
        <dbReference type="ChEBI" id="CHEBI:58805"/>
    </ligand>
</feature>
<feature type="binding site" evidence="3">
    <location>
        <position position="238"/>
    </location>
    <ligand>
        <name>2',3'-cGAMP</name>
        <dbReference type="ChEBI" id="CHEBI:143093"/>
    </ligand>
</feature>
<feature type="binding site" evidence="3">
    <location>
        <position position="238"/>
    </location>
    <ligand>
        <name>2',3'-cUAMP</name>
        <dbReference type="ChEBI" id="CHEBI:228269"/>
    </ligand>
</feature>
<feature type="binding site" evidence="3">
    <location>
        <position position="263"/>
    </location>
    <ligand>
        <name>2',3'-cGAMP</name>
        <dbReference type="ChEBI" id="CHEBI:143093"/>
    </ligand>
</feature>
<feature type="binding site" evidence="3">
    <location>
        <position position="263"/>
    </location>
    <ligand>
        <name>2',3'-cUAMP</name>
        <dbReference type="ChEBI" id="CHEBI:228269"/>
    </ligand>
</feature>
<feature type="binding site" evidence="3">
    <location>
        <position position="263"/>
    </location>
    <ligand>
        <name>3',3'-c-di-GMP</name>
        <dbReference type="ChEBI" id="CHEBI:58805"/>
    </ligand>
</feature>
<feature type="modified residue" description="Phosphoserine" evidence="3">
    <location>
        <position position="354"/>
    </location>
</feature>
<feature type="modified residue" description="Phosphoserine; by TBK1" evidence="3">
    <location>
        <position position="357"/>
    </location>
</feature>
<feature type="modified residue" description="Phosphoserine; by TBK1" evidence="3">
    <location>
        <position position="365"/>
    </location>
</feature>
<feature type="lipid moiety-binding region" description="S-palmitoyl cysteine" evidence="2">
    <location>
        <position position="88"/>
    </location>
</feature>
<feature type="cross-link" description="Glycyl lysine isopeptide (Lys-Gly) (interchain with G-Cter in ubiquitin)" evidence="3">
    <location>
        <position position="150"/>
    </location>
</feature>
<feature type="cross-link" description="Glycyl lysine isopeptide (Lys-Gly) (interchain with G-Cter in ubiquitin)" evidence="3">
    <location>
        <position position="236"/>
    </location>
</feature>
<keyword id="KW-0072">Autophagy</keyword>
<keyword id="KW-1003">Cell membrane</keyword>
<keyword id="KW-0963">Cytoplasm</keyword>
<keyword id="KW-0968">Cytoplasmic vesicle</keyword>
<keyword id="KW-0256">Endoplasmic reticulum</keyword>
<keyword id="KW-0333">Golgi apparatus</keyword>
<keyword id="KW-0391">Immunity</keyword>
<keyword id="KW-0399">Innate immunity</keyword>
<keyword id="KW-0407">Ion channel</keyword>
<keyword id="KW-0406">Ion transport</keyword>
<keyword id="KW-1017">Isopeptide bond</keyword>
<keyword id="KW-0449">Lipoprotein</keyword>
<keyword id="KW-0472">Membrane</keyword>
<keyword id="KW-0496">Mitochondrion</keyword>
<keyword id="KW-1000">Mitochondrion outer membrane</keyword>
<keyword id="KW-0547">Nucleotide-binding</keyword>
<keyword id="KW-0564">Palmitate</keyword>
<keyword id="KW-0597">Phosphoprotein</keyword>
<keyword id="KW-1185">Reference proteome</keyword>
<keyword id="KW-0812">Transmembrane</keyword>
<keyword id="KW-1133">Transmembrane helix</keyword>
<keyword id="KW-0813">Transport</keyword>
<keyword id="KW-0832">Ubl conjugation</keyword>